<proteinExistence type="inferred from homology"/>
<gene>
    <name evidence="1" type="primary">lsrK</name>
    <name type="ordered locus">EcHS_A1593</name>
</gene>
<accession>A8A064</accession>
<evidence type="ECO:0000255" key="1">
    <source>
        <dbReference type="HAMAP-Rule" id="MF_02053"/>
    </source>
</evidence>
<name>LSRK_ECOHS</name>
<protein>
    <recommendedName>
        <fullName evidence="1">Autoinducer-2 kinase</fullName>
        <shortName evidence="1">AI-2 kinase</shortName>
        <ecNumber evidence="1">2.7.1.189</ecNumber>
    </recommendedName>
</protein>
<dbReference type="EC" id="2.7.1.189" evidence="1"/>
<dbReference type="EMBL" id="CP000802">
    <property type="protein sequence ID" value="ABV05918.1"/>
    <property type="molecule type" value="Genomic_DNA"/>
</dbReference>
<dbReference type="RefSeq" id="WP_000113149.1">
    <property type="nucleotide sequence ID" value="NC_009800.1"/>
</dbReference>
<dbReference type="SMR" id="A8A064"/>
<dbReference type="KEGG" id="ecx:EcHS_A1593"/>
<dbReference type="HOGENOM" id="CLU_009281_3_4_6"/>
<dbReference type="GO" id="GO:0005737">
    <property type="term" value="C:cytoplasm"/>
    <property type="evidence" value="ECO:0007669"/>
    <property type="project" value="UniProtKB-SubCell"/>
</dbReference>
<dbReference type="GO" id="GO:0071518">
    <property type="term" value="F:autoinducer-2 kinase activity"/>
    <property type="evidence" value="ECO:0007669"/>
    <property type="project" value="UniProtKB-UniRule"/>
</dbReference>
<dbReference type="GO" id="GO:0005975">
    <property type="term" value="P:carbohydrate metabolic process"/>
    <property type="evidence" value="ECO:0007669"/>
    <property type="project" value="InterPro"/>
</dbReference>
<dbReference type="GO" id="GO:0009372">
    <property type="term" value="P:quorum sensing"/>
    <property type="evidence" value="ECO:0007669"/>
    <property type="project" value="InterPro"/>
</dbReference>
<dbReference type="CDD" id="cd07775">
    <property type="entry name" value="ASKHA_NBD_FGGY_AI-2K"/>
    <property type="match status" value="1"/>
</dbReference>
<dbReference type="FunFam" id="3.30.420.40:FF:000155">
    <property type="entry name" value="Autoinducer-2 kinase"/>
    <property type="match status" value="1"/>
</dbReference>
<dbReference type="Gene3D" id="3.30.420.40">
    <property type="match status" value="2"/>
</dbReference>
<dbReference type="HAMAP" id="MF_02053">
    <property type="entry name" value="LsrK"/>
    <property type="match status" value="1"/>
</dbReference>
<dbReference type="InterPro" id="IPR033676">
    <property type="entry name" value="AI-2_kinase"/>
</dbReference>
<dbReference type="InterPro" id="IPR043129">
    <property type="entry name" value="ATPase_NBD"/>
</dbReference>
<dbReference type="InterPro" id="IPR000577">
    <property type="entry name" value="Carb_kinase_FGGY"/>
</dbReference>
<dbReference type="InterPro" id="IPR018485">
    <property type="entry name" value="FGGY_C"/>
</dbReference>
<dbReference type="InterPro" id="IPR050406">
    <property type="entry name" value="FGGY_Carb_Kinase"/>
</dbReference>
<dbReference type="InterPro" id="IPR018484">
    <property type="entry name" value="FGGY_N"/>
</dbReference>
<dbReference type="NCBIfam" id="NF008187">
    <property type="entry name" value="PRK10939.1"/>
    <property type="match status" value="1"/>
</dbReference>
<dbReference type="PANTHER" id="PTHR43095:SF1">
    <property type="entry name" value="AUTOINDUCER-2 KINASE"/>
    <property type="match status" value="1"/>
</dbReference>
<dbReference type="PANTHER" id="PTHR43095">
    <property type="entry name" value="SUGAR KINASE"/>
    <property type="match status" value="1"/>
</dbReference>
<dbReference type="Pfam" id="PF02782">
    <property type="entry name" value="FGGY_C"/>
    <property type="match status" value="1"/>
</dbReference>
<dbReference type="Pfam" id="PF00370">
    <property type="entry name" value="FGGY_N"/>
    <property type="match status" value="1"/>
</dbReference>
<dbReference type="PIRSF" id="PIRSF000538">
    <property type="entry name" value="GlpK"/>
    <property type="match status" value="1"/>
</dbReference>
<dbReference type="SUPFAM" id="SSF53067">
    <property type="entry name" value="Actin-like ATPase domain"/>
    <property type="match status" value="2"/>
</dbReference>
<sequence>MARLFTPSESKYYLMALDAGTGSIRAVIFDLEGNQIAVGQAEWRHLAVPDVPGSMEFDLNKNWQLACECMRQALHNAGIAPEYIAAVSACSMREGIVLYNNEGTPIWACANVDARAAREVSELKELHNNTFENEVYRATGQTLALSAIPRLLWLAHHRSDIYRQASTITMISDWLAYMLSGELAVDPSNAGTTGLLDLTTRDWKPALLDMAGLRADILSPVKETGTLLGVVSSQAAELCGLKAGTPVVVGGGDVQLGCLGLGVVRPAQTAVLGGTFWQQVVNLAAPVTDPEMNVRVNPHVIPGMVQAESISFFTGLTMRWFRDAFCAEEKLIAERLGIDTYTLLEEMTSRVPPGSWGVMPIFSDRMRFKTWYHAAPSFINLSIDPDKCNKATLFRALEENAAIVSACNLQQIADFSNIHPSSLVFAGGGSKGKLWSQILADVSGLPVNIPVVKEATALGCAIAAGVGAGIFSSMAETGERLVRWERTHTPAPEKHELYQDSRDKWQAVYQDQLGLVDHGLTTSLWKAPGL</sequence>
<comment type="function">
    <text evidence="1">Catalyzes the phosphorylation of autoinducer-2 (AI-2) to phospho-AI-2, which subsequently inactivates the transcriptional regulator LsrR and leads to the transcription of the lsr operon. Phosphorylates the ring-open form of (S)-4,5-dihydroxypentane-2,3-dione (DPD), which is the precursor to all AI-2 signaling molecules, at the C5 position.</text>
</comment>
<comment type="catalytic activity">
    <reaction evidence="1">
        <text>(S)-4,5-dihydroxypentane-2,3-dione + ATP = (2S)-2-hydroxy-3,4-dioxopentyl phosphate + ADP + H(+)</text>
        <dbReference type="Rhea" id="RHEA:15377"/>
        <dbReference type="ChEBI" id="CHEBI:15378"/>
        <dbReference type="ChEBI" id="CHEBI:29484"/>
        <dbReference type="ChEBI" id="CHEBI:30616"/>
        <dbReference type="ChEBI" id="CHEBI:71677"/>
        <dbReference type="ChEBI" id="CHEBI:456216"/>
        <dbReference type="EC" id="2.7.1.189"/>
    </reaction>
</comment>
<comment type="subcellular location">
    <subcellularLocation>
        <location evidence="1">Cytoplasm</location>
    </subcellularLocation>
</comment>
<comment type="similarity">
    <text evidence="1">Belongs to the FGGY kinase family.</text>
</comment>
<feature type="chain" id="PRO_0000351592" description="Autoinducer-2 kinase">
    <location>
        <begin position="1"/>
        <end position="530"/>
    </location>
</feature>
<organism>
    <name type="scientific">Escherichia coli O9:H4 (strain HS)</name>
    <dbReference type="NCBI Taxonomy" id="331112"/>
    <lineage>
        <taxon>Bacteria</taxon>
        <taxon>Pseudomonadati</taxon>
        <taxon>Pseudomonadota</taxon>
        <taxon>Gammaproteobacteria</taxon>
        <taxon>Enterobacterales</taxon>
        <taxon>Enterobacteriaceae</taxon>
        <taxon>Escherichia</taxon>
    </lineage>
</organism>
<keyword id="KW-0963">Cytoplasm</keyword>
<keyword id="KW-0418">Kinase</keyword>
<keyword id="KW-0808">Transferase</keyword>
<reference key="1">
    <citation type="journal article" date="2008" name="J. Bacteriol.">
        <title>The pangenome structure of Escherichia coli: comparative genomic analysis of E. coli commensal and pathogenic isolates.</title>
        <authorList>
            <person name="Rasko D.A."/>
            <person name="Rosovitz M.J."/>
            <person name="Myers G.S.A."/>
            <person name="Mongodin E.F."/>
            <person name="Fricke W.F."/>
            <person name="Gajer P."/>
            <person name="Crabtree J."/>
            <person name="Sebaihia M."/>
            <person name="Thomson N.R."/>
            <person name="Chaudhuri R."/>
            <person name="Henderson I.R."/>
            <person name="Sperandio V."/>
            <person name="Ravel J."/>
        </authorList>
    </citation>
    <scope>NUCLEOTIDE SEQUENCE [LARGE SCALE GENOMIC DNA]</scope>
    <source>
        <strain>HS</strain>
    </source>
</reference>